<keyword id="KW-0963">Cytoplasm</keyword>
<keyword id="KW-0275">Fatty acid biosynthesis</keyword>
<keyword id="KW-0276">Fatty acid metabolism</keyword>
<keyword id="KW-0444">Lipid biosynthesis</keyword>
<keyword id="KW-0443">Lipid metabolism</keyword>
<keyword id="KW-0460">Magnesium</keyword>
<keyword id="KW-0479">Metal-binding</keyword>
<keyword id="KW-1185">Reference proteome</keyword>
<keyword id="KW-0808">Transferase</keyword>
<name>ACPS_NITV2</name>
<evidence type="ECO:0000255" key="1">
    <source>
        <dbReference type="HAMAP-Rule" id="MF_00101"/>
    </source>
</evidence>
<protein>
    <recommendedName>
        <fullName evidence="1">Holo-[acyl-carrier-protein] synthase</fullName>
        <shortName evidence="1">Holo-ACP synthase</shortName>
        <ecNumber evidence="1">2.7.8.7</ecNumber>
    </recommendedName>
    <alternativeName>
        <fullName evidence="1">4'-phosphopantetheinyl transferase AcpS</fullName>
    </alternativeName>
</protein>
<comment type="function">
    <text evidence="1">Transfers the 4'-phosphopantetheine moiety from coenzyme A to a Ser of acyl-carrier-protein.</text>
</comment>
<comment type="catalytic activity">
    <reaction evidence="1">
        <text>apo-[ACP] + CoA = holo-[ACP] + adenosine 3',5'-bisphosphate + H(+)</text>
        <dbReference type="Rhea" id="RHEA:12068"/>
        <dbReference type="Rhea" id="RHEA-COMP:9685"/>
        <dbReference type="Rhea" id="RHEA-COMP:9690"/>
        <dbReference type="ChEBI" id="CHEBI:15378"/>
        <dbReference type="ChEBI" id="CHEBI:29999"/>
        <dbReference type="ChEBI" id="CHEBI:57287"/>
        <dbReference type="ChEBI" id="CHEBI:58343"/>
        <dbReference type="ChEBI" id="CHEBI:64479"/>
        <dbReference type="EC" id="2.7.8.7"/>
    </reaction>
</comment>
<comment type="cofactor">
    <cofactor evidence="1">
        <name>Mg(2+)</name>
        <dbReference type="ChEBI" id="CHEBI:18420"/>
    </cofactor>
</comment>
<comment type="subcellular location">
    <subcellularLocation>
        <location evidence="1">Cytoplasm</location>
    </subcellularLocation>
</comment>
<comment type="similarity">
    <text evidence="1">Belongs to the P-Pant transferase superfamily. AcpS family.</text>
</comment>
<proteinExistence type="inferred from homology"/>
<accession>Q72AT2</accession>
<sequence>MIVGIGIDITEIDRIAKGWGRFGDRFARRILHPHEVVRMPAANPVAFLAGRFAVKEAAVKALGTGFSGGIGPRDIEVGVAPAGAPQLVLHGKAAARMEALGATRTHVSLTHGRDTAAAVVILES</sequence>
<feature type="chain" id="PRO_0000175642" description="Holo-[acyl-carrier-protein] synthase">
    <location>
        <begin position="1"/>
        <end position="124"/>
    </location>
</feature>
<feature type="binding site" evidence="1">
    <location>
        <position position="8"/>
    </location>
    <ligand>
        <name>Mg(2+)</name>
        <dbReference type="ChEBI" id="CHEBI:18420"/>
    </ligand>
</feature>
<feature type="binding site" evidence="1">
    <location>
        <position position="56"/>
    </location>
    <ligand>
        <name>Mg(2+)</name>
        <dbReference type="ChEBI" id="CHEBI:18420"/>
    </ligand>
</feature>
<organism>
    <name type="scientific">Nitratidesulfovibrio vulgaris (strain ATCC 29579 / DSM 644 / CCUG 34227 / NCIMB 8303 / VKM B-1760 / Hildenborough)</name>
    <name type="common">Desulfovibrio vulgaris</name>
    <dbReference type="NCBI Taxonomy" id="882"/>
    <lineage>
        <taxon>Bacteria</taxon>
        <taxon>Pseudomonadati</taxon>
        <taxon>Thermodesulfobacteriota</taxon>
        <taxon>Desulfovibrionia</taxon>
        <taxon>Desulfovibrionales</taxon>
        <taxon>Desulfovibrionaceae</taxon>
        <taxon>Nitratidesulfovibrio</taxon>
    </lineage>
</organism>
<gene>
    <name evidence="1" type="primary">acpS</name>
    <name type="ordered locus">DVU_1909</name>
</gene>
<reference key="1">
    <citation type="journal article" date="2004" name="Nat. Biotechnol.">
        <title>The genome sequence of the anaerobic, sulfate-reducing bacterium Desulfovibrio vulgaris Hildenborough.</title>
        <authorList>
            <person name="Heidelberg J.F."/>
            <person name="Seshadri R."/>
            <person name="Haveman S.A."/>
            <person name="Hemme C.L."/>
            <person name="Paulsen I.T."/>
            <person name="Kolonay J.F."/>
            <person name="Eisen J.A."/>
            <person name="Ward N.L."/>
            <person name="Methe B.A."/>
            <person name="Brinkac L.M."/>
            <person name="Daugherty S.C."/>
            <person name="DeBoy R.T."/>
            <person name="Dodson R.J."/>
            <person name="Durkin A.S."/>
            <person name="Madupu R."/>
            <person name="Nelson W.C."/>
            <person name="Sullivan S.A."/>
            <person name="Fouts D.E."/>
            <person name="Haft D.H."/>
            <person name="Selengut J."/>
            <person name="Peterson J.D."/>
            <person name="Davidsen T.M."/>
            <person name="Zafar N."/>
            <person name="Zhou L."/>
            <person name="Radune D."/>
            <person name="Dimitrov G."/>
            <person name="Hance M."/>
            <person name="Tran K."/>
            <person name="Khouri H.M."/>
            <person name="Gill J."/>
            <person name="Utterback T.R."/>
            <person name="Feldblyum T.V."/>
            <person name="Wall J.D."/>
            <person name="Voordouw G."/>
            <person name="Fraser C.M."/>
        </authorList>
    </citation>
    <scope>NUCLEOTIDE SEQUENCE [LARGE SCALE GENOMIC DNA]</scope>
    <source>
        <strain>ATCC 29579 / DSM 644 / CCUG 34227 / NCIMB 8303 / VKM B-1760 / Hildenborough</strain>
    </source>
</reference>
<dbReference type="EC" id="2.7.8.7" evidence="1"/>
<dbReference type="EMBL" id="AE017285">
    <property type="protein sequence ID" value="AAS96385.1"/>
    <property type="molecule type" value="Genomic_DNA"/>
</dbReference>
<dbReference type="RefSeq" id="WP_010939195.1">
    <property type="nucleotide sequence ID" value="NC_002937.3"/>
</dbReference>
<dbReference type="RefSeq" id="YP_011126.1">
    <property type="nucleotide sequence ID" value="NC_002937.3"/>
</dbReference>
<dbReference type="SMR" id="Q72AT2"/>
<dbReference type="STRING" id="882.DVU_1909"/>
<dbReference type="PaxDb" id="882-DVU_1909"/>
<dbReference type="EnsemblBacteria" id="AAS96385">
    <property type="protein sequence ID" value="AAS96385"/>
    <property type="gene ID" value="DVU_1909"/>
</dbReference>
<dbReference type="KEGG" id="dvu:DVU_1909"/>
<dbReference type="PATRIC" id="fig|882.5.peg.1754"/>
<dbReference type="eggNOG" id="COG0736">
    <property type="taxonomic scope" value="Bacteria"/>
</dbReference>
<dbReference type="HOGENOM" id="CLU_089696_0_2_7"/>
<dbReference type="OrthoDB" id="517356at2"/>
<dbReference type="PhylomeDB" id="Q72AT2"/>
<dbReference type="Proteomes" id="UP000002194">
    <property type="component" value="Chromosome"/>
</dbReference>
<dbReference type="GO" id="GO:0005737">
    <property type="term" value="C:cytoplasm"/>
    <property type="evidence" value="ECO:0007669"/>
    <property type="project" value="UniProtKB-SubCell"/>
</dbReference>
<dbReference type="GO" id="GO:0008897">
    <property type="term" value="F:holo-[acyl-carrier-protein] synthase activity"/>
    <property type="evidence" value="ECO:0007669"/>
    <property type="project" value="UniProtKB-UniRule"/>
</dbReference>
<dbReference type="GO" id="GO:0000287">
    <property type="term" value="F:magnesium ion binding"/>
    <property type="evidence" value="ECO:0007669"/>
    <property type="project" value="UniProtKB-UniRule"/>
</dbReference>
<dbReference type="GO" id="GO:0006633">
    <property type="term" value="P:fatty acid biosynthetic process"/>
    <property type="evidence" value="ECO:0007669"/>
    <property type="project" value="UniProtKB-UniRule"/>
</dbReference>
<dbReference type="Gene3D" id="3.90.470.20">
    <property type="entry name" value="4'-phosphopantetheinyl transferase domain"/>
    <property type="match status" value="1"/>
</dbReference>
<dbReference type="HAMAP" id="MF_00101">
    <property type="entry name" value="AcpS"/>
    <property type="match status" value="1"/>
</dbReference>
<dbReference type="InterPro" id="IPR008278">
    <property type="entry name" value="4-PPantetheinyl_Trfase_dom"/>
</dbReference>
<dbReference type="InterPro" id="IPR037143">
    <property type="entry name" value="4-PPantetheinyl_Trfase_dom_sf"/>
</dbReference>
<dbReference type="InterPro" id="IPR002582">
    <property type="entry name" value="ACPS"/>
</dbReference>
<dbReference type="InterPro" id="IPR004568">
    <property type="entry name" value="Ppantetheine-prot_Trfase_dom"/>
</dbReference>
<dbReference type="NCBIfam" id="TIGR00516">
    <property type="entry name" value="acpS"/>
    <property type="match status" value="1"/>
</dbReference>
<dbReference type="NCBIfam" id="TIGR00556">
    <property type="entry name" value="pantethn_trn"/>
    <property type="match status" value="1"/>
</dbReference>
<dbReference type="NCBIfam" id="NF011251">
    <property type="entry name" value="PRK14657.1"/>
    <property type="match status" value="1"/>
</dbReference>
<dbReference type="Pfam" id="PF01648">
    <property type="entry name" value="ACPS"/>
    <property type="match status" value="1"/>
</dbReference>
<dbReference type="SUPFAM" id="SSF56214">
    <property type="entry name" value="4'-phosphopantetheinyl transferase"/>
    <property type="match status" value="1"/>
</dbReference>